<sequence length="201" mass="21529">MPPLTPQRAAVLAFLQEQAQAGVSPSLAEIAQAFGFASRNAAQKHVQALAEAGLIELLPNQKRGIRVPGGAGRDALLNLPVLGRVAAGVPIGADIGLERQLWLDRALFSLRPDYLLQVQGDSMIDDGILDGDLVGVHRSKEARDGQIVVARVDGEITIKRLERGTERIRLLPRNRAHAPIVVAADADFAIEGLYCGLIRQG</sequence>
<gene>
    <name evidence="1" type="primary">lexA1</name>
    <name type="ordered locus">XOO3442</name>
</gene>
<reference key="1">
    <citation type="journal article" date="2005" name="Nucleic Acids Res.">
        <title>The genome sequence of Xanthomonas oryzae pathovar oryzae KACC10331, the bacterial blight pathogen of rice.</title>
        <authorList>
            <person name="Lee B.-M."/>
            <person name="Park Y.-J."/>
            <person name="Park D.-S."/>
            <person name="Kang H.-W."/>
            <person name="Kim J.-G."/>
            <person name="Song E.-S."/>
            <person name="Park I.-C."/>
            <person name="Yoon U.-H."/>
            <person name="Hahn J.-H."/>
            <person name="Koo B.-S."/>
            <person name="Lee G.-B."/>
            <person name="Kim H."/>
            <person name="Park H.-S."/>
            <person name="Yoon K.-O."/>
            <person name="Kim J.-H."/>
            <person name="Jung C.-H."/>
            <person name="Koh N.-H."/>
            <person name="Seo J.-S."/>
            <person name="Go S.-J."/>
        </authorList>
    </citation>
    <scope>NUCLEOTIDE SEQUENCE [LARGE SCALE GENOMIC DNA]</scope>
    <source>
        <strain>KACC10331 / KXO85</strain>
    </source>
</reference>
<organism>
    <name type="scientific">Xanthomonas oryzae pv. oryzae (strain KACC10331 / KXO85)</name>
    <dbReference type="NCBI Taxonomy" id="291331"/>
    <lineage>
        <taxon>Bacteria</taxon>
        <taxon>Pseudomonadati</taxon>
        <taxon>Pseudomonadota</taxon>
        <taxon>Gammaproteobacteria</taxon>
        <taxon>Lysobacterales</taxon>
        <taxon>Lysobacteraceae</taxon>
        <taxon>Xanthomonas</taxon>
    </lineage>
</organism>
<evidence type="ECO:0000255" key="1">
    <source>
        <dbReference type="HAMAP-Rule" id="MF_00015"/>
    </source>
</evidence>
<protein>
    <recommendedName>
        <fullName evidence="1">LexA repressor 1</fullName>
        <ecNumber evidence="1">3.4.21.88</ecNumber>
    </recommendedName>
</protein>
<name>LEXA1_XANOR</name>
<dbReference type="EC" id="3.4.21.88" evidence="1"/>
<dbReference type="EMBL" id="AE013598">
    <property type="protein sequence ID" value="AAW76696.1"/>
    <property type="molecule type" value="Genomic_DNA"/>
</dbReference>
<dbReference type="SMR" id="Q5GX75"/>
<dbReference type="STRING" id="291331.XOO3442"/>
<dbReference type="MEROPS" id="S24.001"/>
<dbReference type="KEGG" id="xoo:XOO3442"/>
<dbReference type="HOGENOM" id="CLU_066192_45_3_6"/>
<dbReference type="Proteomes" id="UP000006735">
    <property type="component" value="Chromosome"/>
</dbReference>
<dbReference type="GO" id="GO:0003677">
    <property type="term" value="F:DNA binding"/>
    <property type="evidence" value="ECO:0007669"/>
    <property type="project" value="UniProtKB-UniRule"/>
</dbReference>
<dbReference type="GO" id="GO:0004252">
    <property type="term" value="F:serine-type endopeptidase activity"/>
    <property type="evidence" value="ECO:0007669"/>
    <property type="project" value="UniProtKB-UniRule"/>
</dbReference>
<dbReference type="GO" id="GO:0006281">
    <property type="term" value="P:DNA repair"/>
    <property type="evidence" value="ECO:0007669"/>
    <property type="project" value="UniProtKB-UniRule"/>
</dbReference>
<dbReference type="GO" id="GO:0006260">
    <property type="term" value="P:DNA replication"/>
    <property type="evidence" value="ECO:0007669"/>
    <property type="project" value="UniProtKB-UniRule"/>
</dbReference>
<dbReference type="GO" id="GO:0045892">
    <property type="term" value="P:negative regulation of DNA-templated transcription"/>
    <property type="evidence" value="ECO:0007669"/>
    <property type="project" value="UniProtKB-UniRule"/>
</dbReference>
<dbReference type="GO" id="GO:0006508">
    <property type="term" value="P:proteolysis"/>
    <property type="evidence" value="ECO:0007669"/>
    <property type="project" value="InterPro"/>
</dbReference>
<dbReference type="GO" id="GO:0009432">
    <property type="term" value="P:SOS response"/>
    <property type="evidence" value="ECO:0007669"/>
    <property type="project" value="UniProtKB-UniRule"/>
</dbReference>
<dbReference type="CDD" id="cd06529">
    <property type="entry name" value="S24_LexA-like"/>
    <property type="match status" value="1"/>
</dbReference>
<dbReference type="FunFam" id="1.10.10.10:FF:000009">
    <property type="entry name" value="LexA repressor"/>
    <property type="match status" value="1"/>
</dbReference>
<dbReference type="FunFam" id="2.10.109.10:FF:000001">
    <property type="entry name" value="LexA repressor"/>
    <property type="match status" value="1"/>
</dbReference>
<dbReference type="Gene3D" id="2.10.109.10">
    <property type="entry name" value="Umud Fragment, subunit A"/>
    <property type="match status" value="1"/>
</dbReference>
<dbReference type="Gene3D" id="1.10.10.10">
    <property type="entry name" value="Winged helix-like DNA-binding domain superfamily/Winged helix DNA-binding domain"/>
    <property type="match status" value="1"/>
</dbReference>
<dbReference type="HAMAP" id="MF_00015">
    <property type="entry name" value="LexA"/>
    <property type="match status" value="1"/>
</dbReference>
<dbReference type="InterPro" id="IPR006200">
    <property type="entry name" value="LexA"/>
</dbReference>
<dbReference type="InterPro" id="IPR039418">
    <property type="entry name" value="LexA-like"/>
</dbReference>
<dbReference type="InterPro" id="IPR036286">
    <property type="entry name" value="LexA/Signal_pep-like_sf"/>
</dbReference>
<dbReference type="InterPro" id="IPR006199">
    <property type="entry name" value="LexA_DNA-bd_dom"/>
</dbReference>
<dbReference type="InterPro" id="IPR050077">
    <property type="entry name" value="LexA_repressor"/>
</dbReference>
<dbReference type="InterPro" id="IPR006197">
    <property type="entry name" value="Peptidase_S24_LexA"/>
</dbReference>
<dbReference type="InterPro" id="IPR015927">
    <property type="entry name" value="Peptidase_S24_S26A/B/C"/>
</dbReference>
<dbReference type="InterPro" id="IPR036388">
    <property type="entry name" value="WH-like_DNA-bd_sf"/>
</dbReference>
<dbReference type="InterPro" id="IPR036390">
    <property type="entry name" value="WH_DNA-bd_sf"/>
</dbReference>
<dbReference type="NCBIfam" id="TIGR00498">
    <property type="entry name" value="lexA"/>
    <property type="match status" value="1"/>
</dbReference>
<dbReference type="PANTHER" id="PTHR33516">
    <property type="entry name" value="LEXA REPRESSOR"/>
    <property type="match status" value="1"/>
</dbReference>
<dbReference type="PANTHER" id="PTHR33516:SF2">
    <property type="entry name" value="LEXA REPRESSOR-RELATED"/>
    <property type="match status" value="1"/>
</dbReference>
<dbReference type="Pfam" id="PF01726">
    <property type="entry name" value="LexA_DNA_bind"/>
    <property type="match status" value="1"/>
</dbReference>
<dbReference type="Pfam" id="PF00717">
    <property type="entry name" value="Peptidase_S24"/>
    <property type="match status" value="1"/>
</dbReference>
<dbReference type="PRINTS" id="PR00726">
    <property type="entry name" value="LEXASERPTASE"/>
</dbReference>
<dbReference type="SUPFAM" id="SSF51306">
    <property type="entry name" value="LexA/Signal peptidase"/>
    <property type="match status" value="1"/>
</dbReference>
<dbReference type="SUPFAM" id="SSF46785">
    <property type="entry name" value="Winged helix' DNA-binding domain"/>
    <property type="match status" value="1"/>
</dbReference>
<accession>Q5GX75</accession>
<feature type="chain" id="PRO_0000170111" description="LexA repressor 1">
    <location>
        <begin position="1"/>
        <end position="201"/>
    </location>
</feature>
<feature type="DNA-binding region" description="H-T-H motif" evidence="1">
    <location>
        <begin position="27"/>
        <end position="47"/>
    </location>
</feature>
<feature type="active site" description="For autocatalytic cleavage activity" evidence="1">
    <location>
        <position position="122"/>
    </location>
</feature>
<feature type="active site" description="For autocatalytic cleavage activity" evidence="1">
    <location>
        <position position="159"/>
    </location>
</feature>
<feature type="site" description="Cleavage; by autolysis" evidence="1">
    <location>
        <begin position="87"/>
        <end position="88"/>
    </location>
</feature>
<comment type="function">
    <text evidence="1">Represses a number of genes involved in the response to DNA damage (SOS response), including recA and lexA. In the presence of single-stranded DNA, RecA interacts with LexA causing an autocatalytic cleavage which disrupts the DNA-binding part of LexA, leading to derepression of the SOS regulon and eventually DNA repair.</text>
</comment>
<comment type="catalytic activity">
    <reaction evidence="1">
        <text>Hydrolysis of Ala-|-Gly bond in repressor LexA.</text>
        <dbReference type="EC" id="3.4.21.88"/>
    </reaction>
</comment>
<comment type="subunit">
    <text evidence="1">Homodimer.</text>
</comment>
<comment type="similarity">
    <text evidence="1">Belongs to the peptidase S24 family.</text>
</comment>
<keyword id="KW-0068">Autocatalytic cleavage</keyword>
<keyword id="KW-0227">DNA damage</keyword>
<keyword id="KW-0234">DNA repair</keyword>
<keyword id="KW-0235">DNA replication</keyword>
<keyword id="KW-0238">DNA-binding</keyword>
<keyword id="KW-0378">Hydrolase</keyword>
<keyword id="KW-1185">Reference proteome</keyword>
<keyword id="KW-0678">Repressor</keyword>
<keyword id="KW-0742">SOS response</keyword>
<keyword id="KW-0804">Transcription</keyword>
<keyword id="KW-0805">Transcription regulation</keyword>
<proteinExistence type="inferred from homology"/>